<evidence type="ECO:0000255" key="1">
    <source>
        <dbReference type="HAMAP-Rule" id="MF_01865"/>
    </source>
</evidence>
<evidence type="ECO:0000255" key="2">
    <source>
        <dbReference type="PROSITE-ProRule" id="PRU01266"/>
    </source>
</evidence>
<comment type="function">
    <text evidence="1">Catalyzes the methylthiolation of an aspartic acid residue of ribosomal protein uS12.</text>
</comment>
<comment type="catalytic activity">
    <reaction evidence="1">
        <text>L-aspartate(89)-[ribosomal protein uS12]-hydrogen + (sulfur carrier)-SH + AH2 + 2 S-adenosyl-L-methionine = 3-methylsulfanyl-L-aspartate(89)-[ribosomal protein uS12]-hydrogen + (sulfur carrier)-H + 5'-deoxyadenosine + L-methionine + A + S-adenosyl-L-homocysteine + 2 H(+)</text>
        <dbReference type="Rhea" id="RHEA:37087"/>
        <dbReference type="Rhea" id="RHEA-COMP:10460"/>
        <dbReference type="Rhea" id="RHEA-COMP:10461"/>
        <dbReference type="Rhea" id="RHEA-COMP:14737"/>
        <dbReference type="Rhea" id="RHEA-COMP:14739"/>
        <dbReference type="ChEBI" id="CHEBI:13193"/>
        <dbReference type="ChEBI" id="CHEBI:15378"/>
        <dbReference type="ChEBI" id="CHEBI:17319"/>
        <dbReference type="ChEBI" id="CHEBI:17499"/>
        <dbReference type="ChEBI" id="CHEBI:29917"/>
        <dbReference type="ChEBI" id="CHEBI:29961"/>
        <dbReference type="ChEBI" id="CHEBI:57844"/>
        <dbReference type="ChEBI" id="CHEBI:57856"/>
        <dbReference type="ChEBI" id="CHEBI:59789"/>
        <dbReference type="ChEBI" id="CHEBI:64428"/>
        <dbReference type="ChEBI" id="CHEBI:73599"/>
        <dbReference type="EC" id="2.8.4.4"/>
    </reaction>
</comment>
<comment type="cofactor">
    <cofactor evidence="1">
        <name>[4Fe-4S] cluster</name>
        <dbReference type="ChEBI" id="CHEBI:49883"/>
    </cofactor>
    <text evidence="1">Binds 2 [4Fe-4S] clusters. One cluster is coordinated with 3 cysteines and an exchangeable S-adenosyl-L-methionine.</text>
</comment>
<comment type="subcellular location">
    <subcellularLocation>
        <location evidence="1">Cytoplasm</location>
    </subcellularLocation>
</comment>
<comment type="similarity">
    <text evidence="1">Belongs to the methylthiotransferase family. RimO subfamily.</text>
</comment>
<organism>
    <name type="scientific">Escherichia coli O17:K52:H18 (strain UMN026 / ExPEC)</name>
    <dbReference type="NCBI Taxonomy" id="585056"/>
    <lineage>
        <taxon>Bacteria</taxon>
        <taxon>Pseudomonadati</taxon>
        <taxon>Pseudomonadota</taxon>
        <taxon>Gammaproteobacteria</taxon>
        <taxon>Enterobacterales</taxon>
        <taxon>Enterobacteriaceae</taxon>
        <taxon>Escherichia</taxon>
    </lineage>
</organism>
<reference key="1">
    <citation type="journal article" date="2009" name="PLoS Genet.">
        <title>Organised genome dynamics in the Escherichia coli species results in highly diverse adaptive paths.</title>
        <authorList>
            <person name="Touchon M."/>
            <person name="Hoede C."/>
            <person name="Tenaillon O."/>
            <person name="Barbe V."/>
            <person name="Baeriswyl S."/>
            <person name="Bidet P."/>
            <person name="Bingen E."/>
            <person name="Bonacorsi S."/>
            <person name="Bouchier C."/>
            <person name="Bouvet O."/>
            <person name="Calteau A."/>
            <person name="Chiapello H."/>
            <person name="Clermont O."/>
            <person name="Cruveiller S."/>
            <person name="Danchin A."/>
            <person name="Diard M."/>
            <person name="Dossat C."/>
            <person name="Karoui M.E."/>
            <person name="Frapy E."/>
            <person name="Garry L."/>
            <person name="Ghigo J.M."/>
            <person name="Gilles A.M."/>
            <person name="Johnson J."/>
            <person name="Le Bouguenec C."/>
            <person name="Lescat M."/>
            <person name="Mangenot S."/>
            <person name="Martinez-Jehanne V."/>
            <person name="Matic I."/>
            <person name="Nassif X."/>
            <person name="Oztas S."/>
            <person name="Petit M.A."/>
            <person name="Pichon C."/>
            <person name="Rouy Z."/>
            <person name="Ruf C.S."/>
            <person name="Schneider D."/>
            <person name="Tourret J."/>
            <person name="Vacherie B."/>
            <person name="Vallenet D."/>
            <person name="Medigue C."/>
            <person name="Rocha E.P.C."/>
            <person name="Denamur E."/>
        </authorList>
    </citation>
    <scope>NUCLEOTIDE SEQUENCE [LARGE SCALE GENOMIC DNA]</scope>
    <source>
        <strain>UMN026 / ExPEC</strain>
    </source>
</reference>
<keyword id="KW-0004">4Fe-4S</keyword>
<keyword id="KW-0963">Cytoplasm</keyword>
<keyword id="KW-0408">Iron</keyword>
<keyword id="KW-0411">Iron-sulfur</keyword>
<keyword id="KW-0479">Metal-binding</keyword>
<keyword id="KW-0949">S-adenosyl-L-methionine</keyword>
<keyword id="KW-0808">Transferase</keyword>
<name>RIMO_ECOLU</name>
<sequence>MSKVTPQPKIGFVSLGCPKNLVDSERILTELRTEGYDVVPSYDDADMVIVNTCGFIDSAVQESLEAIGEALNENGKVIVTGCLGAKEDQIREVHPKVLEITGPHSYEQVLEHVHHYVPKPKHNPFLSLVPEQGVKLTPRHYAYLKISEGCNHRCTFCIIPSMRGDLVSRPIGEVLSEAKRLVDAGVKEILVISQDTSAYGVDVKHRTGFHNGEPVKTSMVSLCEQLSKLGIWTRLHYVYPYPHVDDVIPLMAEGKILPYLDIPLQHASPRILKLMKRPGSVDRQLARIKQWREICPELTLRSTFIVGFPGETEEDFQMLLDFLKEARLDRVGCFKYSPVEGADANALPDQVPEEVKEERWNRFMQLQQQISAERLQEKVGREILVIIDEVDEEGAIGRSMADAPEIDGAVYLNGETNVKPGDILRVKVEHADEYDLWGSRV</sequence>
<proteinExistence type="inferred from homology"/>
<dbReference type="EC" id="2.8.4.4" evidence="1"/>
<dbReference type="EMBL" id="CU928163">
    <property type="protein sequence ID" value="CAR12234.1"/>
    <property type="molecule type" value="Genomic_DNA"/>
</dbReference>
<dbReference type="RefSeq" id="WP_000049367.1">
    <property type="nucleotide sequence ID" value="NC_011751.1"/>
</dbReference>
<dbReference type="RefSeq" id="YP_002411778.1">
    <property type="nucleotide sequence ID" value="NC_011751.1"/>
</dbReference>
<dbReference type="SMR" id="B7NAI1"/>
<dbReference type="STRING" id="585056.ECUMN_1025"/>
<dbReference type="GeneID" id="75204700"/>
<dbReference type="KEGG" id="eum:ECUMN_1025"/>
<dbReference type="PATRIC" id="fig|585056.7.peg.1217"/>
<dbReference type="HOGENOM" id="CLU_018697_0_0_6"/>
<dbReference type="Proteomes" id="UP000007097">
    <property type="component" value="Chromosome"/>
</dbReference>
<dbReference type="GO" id="GO:0005829">
    <property type="term" value="C:cytosol"/>
    <property type="evidence" value="ECO:0007669"/>
    <property type="project" value="TreeGrafter"/>
</dbReference>
<dbReference type="GO" id="GO:0051539">
    <property type="term" value="F:4 iron, 4 sulfur cluster binding"/>
    <property type="evidence" value="ECO:0007669"/>
    <property type="project" value="UniProtKB-UniRule"/>
</dbReference>
<dbReference type="GO" id="GO:0035599">
    <property type="term" value="F:aspartic acid methylthiotransferase activity"/>
    <property type="evidence" value="ECO:0007669"/>
    <property type="project" value="TreeGrafter"/>
</dbReference>
<dbReference type="GO" id="GO:0046872">
    <property type="term" value="F:metal ion binding"/>
    <property type="evidence" value="ECO:0007669"/>
    <property type="project" value="UniProtKB-KW"/>
</dbReference>
<dbReference type="GO" id="GO:0103039">
    <property type="term" value="F:protein methylthiotransferase activity"/>
    <property type="evidence" value="ECO:0007669"/>
    <property type="project" value="UniProtKB-EC"/>
</dbReference>
<dbReference type="GO" id="GO:0006400">
    <property type="term" value="P:tRNA modification"/>
    <property type="evidence" value="ECO:0007669"/>
    <property type="project" value="InterPro"/>
</dbReference>
<dbReference type="CDD" id="cd01335">
    <property type="entry name" value="Radical_SAM"/>
    <property type="match status" value="1"/>
</dbReference>
<dbReference type="FunFam" id="2.40.50.140:FF:000060">
    <property type="entry name" value="Ribosomal protein S12 methylthiotransferase RimO"/>
    <property type="match status" value="1"/>
</dbReference>
<dbReference type="FunFam" id="3.40.50.12160:FF:000002">
    <property type="entry name" value="Ribosomal protein S12 methylthiotransferase RimO"/>
    <property type="match status" value="1"/>
</dbReference>
<dbReference type="FunFam" id="3.80.30.20:FF:000001">
    <property type="entry name" value="tRNA-2-methylthio-N(6)-dimethylallyladenosine synthase 2"/>
    <property type="match status" value="1"/>
</dbReference>
<dbReference type="Gene3D" id="3.40.50.12160">
    <property type="entry name" value="Methylthiotransferase, N-terminal domain"/>
    <property type="match status" value="1"/>
</dbReference>
<dbReference type="Gene3D" id="2.40.50.140">
    <property type="entry name" value="Nucleic acid-binding proteins"/>
    <property type="match status" value="1"/>
</dbReference>
<dbReference type="Gene3D" id="3.80.30.20">
    <property type="entry name" value="tm_1862 like domain"/>
    <property type="match status" value="1"/>
</dbReference>
<dbReference type="HAMAP" id="MF_01865">
    <property type="entry name" value="MTTase_RimO"/>
    <property type="match status" value="1"/>
</dbReference>
<dbReference type="InterPro" id="IPR006638">
    <property type="entry name" value="Elp3/MiaA/NifB-like_rSAM"/>
</dbReference>
<dbReference type="InterPro" id="IPR005839">
    <property type="entry name" value="Methylthiotransferase"/>
</dbReference>
<dbReference type="InterPro" id="IPR020612">
    <property type="entry name" value="Methylthiotransferase_CS"/>
</dbReference>
<dbReference type="InterPro" id="IPR013848">
    <property type="entry name" value="Methylthiotransferase_N"/>
</dbReference>
<dbReference type="InterPro" id="IPR038135">
    <property type="entry name" value="Methylthiotransferase_N_sf"/>
</dbReference>
<dbReference type="InterPro" id="IPR012340">
    <property type="entry name" value="NA-bd_OB-fold"/>
</dbReference>
<dbReference type="InterPro" id="IPR005840">
    <property type="entry name" value="Ribosomal_uS12_MeSTrfase_RimO"/>
</dbReference>
<dbReference type="InterPro" id="IPR007197">
    <property type="entry name" value="rSAM"/>
</dbReference>
<dbReference type="InterPro" id="IPR023404">
    <property type="entry name" value="rSAM_horseshoe"/>
</dbReference>
<dbReference type="InterPro" id="IPR002792">
    <property type="entry name" value="TRAM_dom"/>
</dbReference>
<dbReference type="NCBIfam" id="TIGR01125">
    <property type="entry name" value="30S ribosomal protein S12 methylthiotransferase RimO"/>
    <property type="match status" value="1"/>
</dbReference>
<dbReference type="NCBIfam" id="TIGR00089">
    <property type="entry name" value="MiaB/RimO family radical SAM methylthiotransferase"/>
    <property type="match status" value="1"/>
</dbReference>
<dbReference type="PANTHER" id="PTHR43837">
    <property type="entry name" value="RIBOSOMAL PROTEIN S12 METHYLTHIOTRANSFERASE RIMO"/>
    <property type="match status" value="1"/>
</dbReference>
<dbReference type="PANTHER" id="PTHR43837:SF1">
    <property type="entry name" value="RIBOSOMAL PROTEIN US12 METHYLTHIOTRANSFERASE RIMO"/>
    <property type="match status" value="1"/>
</dbReference>
<dbReference type="Pfam" id="PF04055">
    <property type="entry name" value="Radical_SAM"/>
    <property type="match status" value="1"/>
</dbReference>
<dbReference type="Pfam" id="PF18693">
    <property type="entry name" value="TRAM_2"/>
    <property type="match status" value="1"/>
</dbReference>
<dbReference type="Pfam" id="PF00919">
    <property type="entry name" value="UPF0004"/>
    <property type="match status" value="1"/>
</dbReference>
<dbReference type="SFLD" id="SFLDG01082">
    <property type="entry name" value="B12-binding_domain_containing"/>
    <property type="match status" value="1"/>
</dbReference>
<dbReference type="SFLD" id="SFLDS00029">
    <property type="entry name" value="Radical_SAM"/>
    <property type="match status" value="1"/>
</dbReference>
<dbReference type="SFLD" id="SFLDF00274">
    <property type="entry name" value="ribosomal_protein_S12_methylth"/>
    <property type="match status" value="1"/>
</dbReference>
<dbReference type="SMART" id="SM00729">
    <property type="entry name" value="Elp3"/>
    <property type="match status" value="1"/>
</dbReference>
<dbReference type="SUPFAM" id="SSF102114">
    <property type="entry name" value="Radical SAM enzymes"/>
    <property type="match status" value="1"/>
</dbReference>
<dbReference type="PROSITE" id="PS51449">
    <property type="entry name" value="MTTASE_N"/>
    <property type="match status" value="1"/>
</dbReference>
<dbReference type="PROSITE" id="PS01278">
    <property type="entry name" value="MTTASE_RADICAL"/>
    <property type="match status" value="1"/>
</dbReference>
<dbReference type="PROSITE" id="PS51918">
    <property type="entry name" value="RADICAL_SAM"/>
    <property type="match status" value="1"/>
</dbReference>
<dbReference type="PROSITE" id="PS50926">
    <property type="entry name" value="TRAM"/>
    <property type="match status" value="1"/>
</dbReference>
<protein>
    <recommendedName>
        <fullName evidence="1">Ribosomal protein uS12 methylthiotransferase RimO</fullName>
        <shortName evidence="1">uS12 MTTase</shortName>
        <shortName evidence="1">uS12 methylthiotransferase</shortName>
        <ecNumber evidence="1">2.8.4.4</ecNumber>
    </recommendedName>
    <alternativeName>
        <fullName evidence="1">Ribosomal protein uS12 (aspartate-C(3))-methylthiotransferase</fullName>
    </alternativeName>
    <alternativeName>
        <fullName evidence="1">Ribosome maturation factor RimO</fullName>
    </alternativeName>
</protein>
<feature type="chain" id="PRO_0000374824" description="Ribosomal protein uS12 methylthiotransferase RimO">
    <location>
        <begin position="1"/>
        <end position="441"/>
    </location>
</feature>
<feature type="domain" description="MTTase N-terminal" evidence="1">
    <location>
        <begin position="8"/>
        <end position="118"/>
    </location>
</feature>
<feature type="domain" description="Radical SAM core" evidence="2">
    <location>
        <begin position="136"/>
        <end position="373"/>
    </location>
</feature>
<feature type="domain" description="TRAM" evidence="1">
    <location>
        <begin position="376"/>
        <end position="441"/>
    </location>
</feature>
<feature type="binding site" evidence="1">
    <location>
        <position position="17"/>
    </location>
    <ligand>
        <name>[4Fe-4S] cluster</name>
        <dbReference type="ChEBI" id="CHEBI:49883"/>
        <label>1</label>
    </ligand>
</feature>
<feature type="binding site" evidence="1">
    <location>
        <position position="53"/>
    </location>
    <ligand>
        <name>[4Fe-4S] cluster</name>
        <dbReference type="ChEBI" id="CHEBI:49883"/>
        <label>1</label>
    </ligand>
</feature>
<feature type="binding site" evidence="1">
    <location>
        <position position="82"/>
    </location>
    <ligand>
        <name>[4Fe-4S] cluster</name>
        <dbReference type="ChEBI" id="CHEBI:49883"/>
        <label>1</label>
    </ligand>
</feature>
<feature type="binding site" evidence="1">
    <location>
        <position position="150"/>
    </location>
    <ligand>
        <name>[4Fe-4S] cluster</name>
        <dbReference type="ChEBI" id="CHEBI:49883"/>
        <label>2</label>
        <note>4Fe-4S-S-AdoMet</note>
    </ligand>
</feature>
<feature type="binding site" evidence="1">
    <location>
        <position position="154"/>
    </location>
    <ligand>
        <name>[4Fe-4S] cluster</name>
        <dbReference type="ChEBI" id="CHEBI:49883"/>
        <label>2</label>
        <note>4Fe-4S-S-AdoMet</note>
    </ligand>
</feature>
<feature type="binding site" evidence="1">
    <location>
        <position position="157"/>
    </location>
    <ligand>
        <name>[4Fe-4S] cluster</name>
        <dbReference type="ChEBI" id="CHEBI:49883"/>
        <label>2</label>
        <note>4Fe-4S-S-AdoMet</note>
    </ligand>
</feature>
<gene>
    <name evidence="1" type="primary">rimO</name>
    <name type="ordered locus">ECUMN_1025</name>
</gene>
<accession>B7NAI1</accession>